<proteinExistence type="inferred from homology"/>
<sequence>MGIKDWPEGEGPRDKLLQKGAGQLSDAELLAVLLRNGLAGLNAVDLARSLISEFGGLRNLLCAPRNQVCRLPGVGPVKYAQLQAAAELARRVAQENLQRGQVLTNPDLTRDYLMRQLADRSYEVFAVLLLDSQHRVIQFVELFRGTIDSASVYPREVVSLVLEKKAAAVIVCHNHPSGIAEPSQADRRITERLKNALATIDVSLLDHMVVGDREIVSFAERGWIN</sequence>
<accession>A3CZJ6</accession>
<name>Y377_SHEB5</name>
<gene>
    <name type="ordered locus">Sbal_0377</name>
</gene>
<keyword id="KW-0378">Hydrolase</keyword>
<keyword id="KW-0479">Metal-binding</keyword>
<keyword id="KW-0482">Metalloprotease</keyword>
<keyword id="KW-0645">Protease</keyword>
<keyword id="KW-1185">Reference proteome</keyword>
<keyword id="KW-0862">Zinc</keyword>
<evidence type="ECO:0000255" key="1">
    <source>
        <dbReference type="PROSITE-ProRule" id="PRU01182"/>
    </source>
</evidence>
<evidence type="ECO:0000305" key="2"/>
<dbReference type="EMBL" id="CP000563">
    <property type="protein sequence ID" value="ABN59909.1"/>
    <property type="molecule type" value="Genomic_DNA"/>
</dbReference>
<dbReference type="SMR" id="A3CZJ6"/>
<dbReference type="STRING" id="325240.Sbal_0377"/>
<dbReference type="KEGG" id="sbl:Sbal_0377"/>
<dbReference type="HOGENOM" id="CLU_073529_0_1_6"/>
<dbReference type="OrthoDB" id="9804482at2"/>
<dbReference type="Proteomes" id="UP000001557">
    <property type="component" value="Chromosome"/>
</dbReference>
<dbReference type="GO" id="GO:0046872">
    <property type="term" value="F:metal ion binding"/>
    <property type="evidence" value="ECO:0007669"/>
    <property type="project" value="UniProtKB-KW"/>
</dbReference>
<dbReference type="GO" id="GO:0008237">
    <property type="term" value="F:metallopeptidase activity"/>
    <property type="evidence" value="ECO:0007669"/>
    <property type="project" value="UniProtKB-KW"/>
</dbReference>
<dbReference type="GO" id="GO:0006508">
    <property type="term" value="P:proteolysis"/>
    <property type="evidence" value="ECO:0007669"/>
    <property type="project" value="UniProtKB-KW"/>
</dbReference>
<dbReference type="CDD" id="cd08071">
    <property type="entry name" value="MPN_DUF2466"/>
    <property type="match status" value="1"/>
</dbReference>
<dbReference type="FunFam" id="3.40.140.10:FF:000032">
    <property type="entry name" value="DNA repair protein RadC"/>
    <property type="match status" value="1"/>
</dbReference>
<dbReference type="Gene3D" id="3.40.140.10">
    <property type="entry name" value="Cytidine Deaminase, domain 2"/>
    <property type="match status" value="1"/>
</dbReference>
<dbReference type="InterPro" id="IPR037518">
    <property type="entry name" value="MPN"/>
</dbReference>
<dbReference type="InterPro" id="IPR025657">
    <property type="entry name" value="RadC_JAB"/>
</dbReference>
<dbReference type="InterPro" id="IPR010994">
    <property type="entry name" value="RuvA_2-like"/>
</dbReference>
<dbReference type="InterPro" id="IPR001405">
    <property type="entry name" value="UPF0758"/>
</dbReference>
<dbReference type="InterPro" id="IPR020891">
    <property type="entry name" value="UPF0758_CS"/>
</dbReference>
<dbReference type="InterPro" id="IPR046778">
    <property type="entry name" value="UPF0758_N"/>
</dbReference>
<dbReference type="NCBIfam" id="NF000642">
    <property type="entry name" value="PRK00024.1"/>
    <property type="match status" value="1"/>
</dbReference>
<dbReference type="NCBIfam" id="TIGR00608">
    <property type="entry name" value="radc"/>
    <property type="match status" value="1"/>
</dbReference>
<dbReference type="PANTHER" id="PTHR30471">
    <property type="entry name" value="DNA REPAIR PROTEIN RADC"/>
    <property type="match status" value="1"/>
</dbReference>
<dbReference type="PANTHER" id="PTHR30471:SF3">
    <property type="entry name" value="UPF0758 PROTEIN YEES-RELATED"/>
    <property type="match status" value="1"/>
</dbReference>
<dbReference type="Pfam" id="PF04002">
    <property type="entry name" value="RadC"/>
    <property type="match status" value="1"/>
</dbReference>
<dbReference type="Pfam" id="PF20582">
    <property type="entry name" value="UPF0758_N"/>
    <property type="match status" value="1"/>
</dbReference>
<dbReference type="SUPFAM" id="SSF102712">
    <property type="entry name" value="JAB1/MPN domain"/>
    <property type="match status" value="1"/>
</dbReference>
<dbReference type="SUPFAM" id="SSF47781">
    <property type="entry name" value="RuvA domain 2-like"/>
    <property type="match status" value="1"/>
</dbReference>
<dbReference type="PROSITE" id="PS50249">
    <property type="entry name" value="MPN"/>
    <property type="match status" value="1"/>
</dbReference>
<dbReference type="PROSITE" id="PS01302">
    <property type="entry name" value="UPF0758"/>
    <property type="match status" value="1"/>
</dbReference>
<comment type="similarity">
    <text evidence="2">Belongs to the UPF0758 family.</text>
</comment>
<organism>
    <name type="scientific">Shewanella baltica (strain OS155 / ATCC BAA-1091)</name>
    <dbReference type="NCBI Taxonomy" id="325240"/>
    <lineage>
        <taxon>Bacteria</taxon>
        <taxon>Pseudomonadati</taxon>
        <taxon>Pseudomonadota</taxon>
        <taxon>Gammaproteobacteria</taxon>
        <taxon>Alteromonadales</taxon>
        <taxon>Shewanellaceae</taxon>
        <taxon>Shewanella</taxon>
    </lineage>
</organism>
<reference key="1">
    <citation type="submission" date="2007-02" db="EMBL/GenBank/DDBJ databases">
        <title>Complete sequence of chromosome of Shewanella baltica OS155.</title>
        <authorList>
            <consortium name="US DOE Joint Genome Institute"/>
            <person name="Copeland A."/>
            <person name="Lucas S."/>
            <person name="Lapidus A."/>
            <person name="Barry K."/>
            <person name="Detter J.C."/>
            <person name="Glavina del Rio T."/>
            <person name="Hammon N."/>
            <person name="Israni S."/>
            <person name="Dalin E."/>
            <person name="Tice H."/>
            <person name="Pitluck S."/>
            <person name="Sims D.R."/>
            <person name="Brettin T."/>
            <person name="Bruce D."/>
            <person name="Han C."/>
            <person name="Tapia R."/>
            <person name="Brainard J."/>
            <person name="Schmutz J."/>
            <person name="Larimer F."/>
            <person name="Land M."/>
            <person name="Hauser L."/>
            <person name="Kyrpides N."/>
            <person name="Mikhailova N."/>
            <person name="Brettar I."/>
            <person name="Klappenbach J."/>
            <person name="Konstantinidis K."/>
            <person name="Rodrigues J."/>
            <person name="Tiedje J."/>
            <person name="Richardson P."/>
        </authorList>
    </citation>
    <scope>NUCLEOTIDE SEQUENCE [LARGE SCALE GENOMIC DNA]</scope>
    <source>
        <strain>OS155 / ATCC BAA-1091</strain>
    </source>
</reference>
<protein>
    <recommendedName>
        <fullName>UPF0758 protein Sbal_0377</fullName>
    </recommendedName>
</protein>
<feature type="chain" id="PRO_1000001690" description="UPF0758 protein Sbal_0377">
    <location>
        <begin position="1"/>
        <end position="225"/>
    </location>
</feature>
<feature type="domain" description="MPN" evidence="1">
    <location>
        <begin position="102"/>
        <end position="224"/>
    </location>
</feature>
<feature type="short sequence motif" description="JAMM motif" evidence="1">
    <location>
        <begin position="173"/>
        <end position="186"/>
    </location>
</feature>
<feature type="binding site" evidence="1">
    <location>
        <position position="173"/>
    </location>
    <ligand>
        <name>Zn(2+)</name>
        <dbReference type="ChEBI" id="CHEBI:29105"/>
        <note>catalytic</note>
    </ligand>
</feature>
<feature type="binding site" evidence="1">
    <location>
        <position position="175"/>
    </location>
    <ligand>
        <name>Zn(2+)</name>
        <dbReference type="ChEBI" id="CHEBI:29105"/>
        <note>catalytic</note>
    </ligand>
</feature>
<feature type="binding site" evidence="1">
    <location>
        <position position="186"/>
    </location>
    <ligand>
        <name>Zn(2+)</name>
        <dbReference type="ChEBI" id="CHEBI:29105"/>
        <note>catalytic</note>
    </ligand>
</feature>